<sequence length="381" mass="44749">MSCFGGGVEDDRTKEQKRQNKLIDQQLKKDKKAYRALHRLLLLGAGESGKSTVVKQMKILHKDGFSDEERKEKLVDIKSNIRDIVVTVTKAMSELDPPVSLGSPENEEHLQYLWSDEVTRKDYDYPEKFFEAVSKVWNDSGVQTCSARSNEYQLIDSAAYFMASEKQAQLKEPNYIPNDQDILRCRVLTSGIFETRFVVDKVHFYMFGVGGQRIERRKWIQCFNDVTAIIFVVACSSFNMVIREDLYTNRLRESLDLFEQIWNNRWLRTVSIILFLNKQDILKEKIDAGKRVENYFLEFNSYRPPDNLDLSKEPPGSSSTFLKARYFFRDMFLRITNKSHDGRHFCYPHFTTAVDTENIRRVFDSCRDIIQRMHLQKYELL</sequence>
<dbReference type="EMBL" id="Y14249">
    <property type="protein sequence ID" value="CAB43528.1"/>
    <property type="molecule type" value="mRNA"/>
</dbReference>
<dbReference type="SMR" id="Q9XZV5"/>
<dbReference type="GO" id="GO:0005737">
    <property type="term" value="C:cytoplasm"/>
    <property type="evidence" value="ECO:0007669"/>
    <property type="project" value="TreeGrafter"/>
</dbReference>
<dbReference type="GO" id="GO:0005834">
    <property type="term" value="C:heterotrimeric G-protein complex"/>
    <property type="evidence" value="ECO:0007669"/>
    <property type="project" value="TreeGrafter"/>
</dbReference>
<dbReference type="GO" id="GO:0001664">
    <property type="term" value="F:G protein-coupled receptor binding"/>
    <property type="evidence" value="ECO:0007669"/>
    <property type="project" value="TreeGrafter"/>
</dbReference>
<dbReference type="GO" id="GO:0031683">
    <property type="term" value="F:G-protein beta/gamma-subunit complex binding"/>
    <property type="evidence" value="ECO:0007669"/>
    <property type="project" value="InterPro"/>
</dbReference>
<dbReference type="GO" id="GO:0005525">
    <property type="term" value="F:GTP binding"/>
    <property type="evidence" value="ECO:0007669"/>
    <property type="project" value="UniProtKB-KW"/>
</dbReference>
<dbReference type="GO" id="GO:0003924">
    <property type="term" value="F:GTPase activity"/>
    <property type="evidence" value="ECO:0007669"/>
    <property type="project" value="InterPro"/>
</dbReference>
<dbReference type="GO" id="GO:0046872">
    <property type="term" value="F:metal ion binding"/>
    <property type="evidence" value="ECO:0007669"/>
    <property type="project" value="UniProtKB-KW"/>
</dbReference>
<dbReference type="GO" id="GO:0007191">
    <property type="term" value="P:adenylate cyclase-activating dopamine receptor signaling pathway"/>
    <property type="evidence" value="ECO:0007669"/>
    <property type="project" value="TreeGrafter"/>
</dbReference>
<dbReference type="GO" id="GO:0007606">
    <property type="term" value="P:sensory perception of chemical stimulus"/>
    <property type="evidence" value="ECO:0007669"/>
    <property type="project" value="TreeGrafter"/>
</dbReference>
<dbReference type="CDD" id="cd00066">
    <property type="entry name" value="G-alpha"/>
    <property type="match status" value="1"/>
</dbReference>
<dbReference type="FunFam" id="3.40.50.300:FF:006178">
    <property type="entry name" value="Guanine nucleotide-binding protein G(s) subunit alpha isoforms short"/>
    <property type="match status" value="1"/>
</dbReference>
<dbReference type="Gene3D" id="1.10.400.10">
    <property type="entry name" value="GI Alpha 1, domain 2-like"/>
    <property type="match status" value="1"/>
</dbReference>
<dbReference type="Gene3D" id="3.40.50.300">
    <property type="entry name" value="P-loop containing nucleotide triphosphate hydrolases"/>
    <property type="match status" value="1"/>
</dbReference>
<dbReference type="InterPro" id="IPR000367">
    <property type="entry name" value="Gprotein_alpha_S"/>
</dbReference>
<dbReference type="InterPro" id="IPR001019">
    <property type="entry name" value="Gprotein_alpha_su"/>
</dbReference>
<dbReference type="InterPro" id="IPR011025">
    <property type="entry name" value="GproteinA_insert"/>
</dbReference>
<dbReference type="InterPro" id="IPR027417">
    <property type="entry name" value="P-loop_NTPase"/>
</dbReference>
<dbReference type="PANTHER" id="PTHR10218:SF212">
    <property type="entry name" value="G PROTEIN ALPHA S SUBUNIT"/>
    <property type="match status" value="1"/>
</dbReference>
<dbReference type="PANTHER" id="PTHR10218">
    <property type="entry name" value="GTP-BINDING PROTEIN ALPHA SUBUNIT"/>
    <property type="match status" value="1"/>
</dbReference>
<dbReference type="Pfam" id="PF00503">
    <property type="entry name" value="G-alpha"/>
    <property type="match status" value="1"/>
</dbReference>
<dbReference type="PRINTS" id="PR00318">
    <property type="entry name" value="GPROTEINA"/>
</dbReference>
<dbReference type="PRINTS" id="PR00443">
    <property type="entry name" value="GPROTEINAS"/>
</dbReference>
<dbReference type="SMART" id="SM00275">
    <property type="entry name" value="G_alpha"/>
    <property type="match status" value="1"/>
</dbReference>
<dbReference type="SUPFAM" id="SSF52540">
    <property type="entry name" value="P-loop containing nucleoside triphosphate hydrolases"/>
    <property type="match status" value="1"/>
</dbReference>
<dbReference type="SUPFAM" id="SSF47895">
    <property type="entry name" value="Transducin (alpha subunit), insertion domain"/>
    <property type="match status" value="1"/>
</dbReference>
<dbReference type="PROSITE" id="PS51882">
    <property type="entry name" value="G_ALPHA"/>
    <property type="match status" value="1"/>
</dbReference>
<keyword id="KW-0342">GTP-binding</keyword>
<keyword id="KW-0449">Lipoprotein</keyword>
<keyword id="KW-0460">Magnesium</keyword>
<keyword id="KW-0479">Metal-binding</keyword>
<keyword id="KW-0547">Nucleotide-binding</keyword>
<keyword id="KW-0564">Palmitate</keyword>
<keyword id="KW-0807">Transducer</keyword>
<evidence type="ECO:0000250" key="1"/>
<evidence type="ECO:0000255" key="2"/>
<evidence type="ECO:0000255" key="3">
    <source>
        <dbReference type="PROSITE-ProRule" id="PRU01230"/>
    </source>
</evidence>
<evidence type="ECO:0000305" key="4"/>
<feature type="chain" id="PRO_0000203726" description="Guanine nucleotide-binding protein G(s) subunit alpha">
    <location>
        <begin position="1"/>
        <end position="381"/>
    </location>
</feature>
<feature type="domain" description="G-alpha" evidence="3">
    <location>
        <begin position="36"/>
        <end position="381"/>
    </location>
</feature>
<feature type="region of interest" description="G1 motif" evidence="3">
    <location>
        <begin position="39"/>
        <end position="52"/>
    </location>
</feature>
<feature type="region of interest" description="G2 motif" evidence="3">
    <location>
        <begin position="181"/>
        <end position="189"/>
    </location>
</feature>
<feature type="region of interest" description="G3 motif" evidence="3">
    <location>
        <begin position="204"/>
        <end position="213"/>
    </location>
</feature>
<feature type="region of interest" description="G4 motif" evidence="3">
    <location>
        <begin position="273"/>
        <end position="280"/>
    </location>
</feature>
<feature type="region of interest" description="G5 motif" evidence="3">
    <location>
        <begin position="351"/>
        <end position="356"/>
    </location>
</feature>
<feature type="binding site" evidence="1">
    <location>
        <begin position="44"/>
        <end position="51"/>
    </location>
    <ligand>
        <name>GTP</name>
        <dbReference type="ChEBI" id="CHEBI:37565"/>
    </ligand>
</feature>
<feature type="binding site" evidence="1">
    <location>
        <position position="51"/>
    </location>
    <ligand>
        <name>Mg(2+)</name>
        <dbReference type="ChEBI" id="CHEBI:18420"/>
    </ligand>
</feature>
<feature type="binding site" evidence="1">
    <location>
        <begin position="183"/>
        <end position="189"/>
    </location>
    <ligand>
        <name>GTP</name>
        <dbReference type="ChEBI" id="CHEBI:37565"/>
    </ligand>
</feature>
<feature type="binding site" evidence="1">
    <location>
        <position position="189"/>
    </location>
    <ligand>
        <name>Mg(2+)</name>
        <dbReference type="ChEBI" id="CHEBI:18420"/>
    </ligand>
</feature>
<feature type="binding site" evidence="1">
    <location>
        <begin position="208"/>
        <end position="212"/>
    </location>
    <ligand>
        <name>GTP</name>
        <dbReference type="ChEBI" id="CHEBI:37565"/>
    </ligand>
</feature>
<feature type="binding site" evidence="1">
    <location>
        <begin position="277"/>
        <end position="280"/>
    </location>
    <ligand>
        <name>GTP</name>
        <dbReference type="ChEBI" id="CHEBI:37565"/>
    </ligand>
</feature>
<feature type="binding site" evidence="1">
    <location>
        <position position="353"/>
    </location>
    <ligand>
        <name>GTP</name>
        <dbReference type="ChEBI" id="CHEBI:37565"/>
    </ligand>
</feature>
<feature type="lipid moiety-binding region" description="S-palmitoyl cysteine" evidence="2">
    <location>
        <position position="3"/>
    </location>
</feature>
<organism>
    <name type="scientific">Geodia cydonium</name>
    <name type="common">Sponge</name>
    <dbReference type="NCBI Taxonomy" id="6047"/>
    <lineage>
        <taxon>Eukaryota</taxon>
        <taxon>Metazoa</taxon>
        <taxon>Porifera</taxon>
        <taxon>Demospongiae</taxon>
        <taxon>Heteroscleromorpha</taxon>
        <taxon>Tetractinellida</taxon>
        <taxon>Astrophorina</taxon>
        <taxon>Geodiidae</taxon>
        <taxon>Geodia</taxon>
    </lineage>
</organism>
<name>GNAS_GEOCY</name>
<proteinExistence type="evidence at transcript level"/>
<protein>
    <recommendedName>
        <fullName>Guanine nucleotide-binding protein G(s) subunit alpha</fullName>
    </recommendedName>
    <alternativeName>
        <fullName>Adenylate cyclase-stimulating G alpha protein</fullName>
    </alternativeName>
</protein>
<accession>Q9XZV5</accession>
<reference key="1">
    <citation type="journal article" date="1998" name="Biochim. Biophys. Acta">
        <title>Evolutionary analysis of G-proteins in early metazoans: cloning of alpha- and beta-subunits from the sponge Geodia cydonium.</title>
        <authorList>
            <person name="Seack J."/>
            <person name="Kruse M."/>
            <person name="Mueller W.E.G."/>
        </authorList>
    </citation>
    <scope>NUCLEOTIDE SEQUENCE [MRNA]</scope>
</reference>
<comment type="function">
    <text>Guanine nucleotide-binding proteins (G proteins) are involved as modulators or transducers in various transmembrane signaling systems. The G(s) protein is involved in hormonal regulation of adenylate cyclase: it activates the cyclase in response to beta-adrenergic stimuli.</text>
</comment>
<comment type="subunit">
    <text>G proteins are composed of 3 units; alpha, beta and gamma. The alpha chain contains the guanine nucleotide binding site.</text>
</comment>
<comment type="similarity">
    <text evidence="4">Belongs to the G-alpha family. G(s) subfamily.</text>
</comment>